<gene>
    <name evidence="1" type="primary">pagP</name>
    <name type="synonym">crcA</name>
    <name type="ordered locus">PAU_01754</name>
</gene>
<evidence type="ECO:0000255" key="1">
    <source>
        <dbReference type="HAMAP-Rule" id="MF_00837"/>
    </source>
</evidence>
<feature type="signal peptide" evidence="1">
    <location>
        <begin position="1"/>
        <end position="24"/>
    </location>
</feature>
<feature type="chain" id="PRO_5000502014" description="Lipid A acyltransferase PagP">
    <location>
        <begin position="25"/>
        <end position="207"/>
    </location>
</feature>
<feature type="active site" evidence="1">
    <location>
        <position position="79"/>
    </location>
</feature>
<feature type="active site" evidence="1">
    <location>
        <position position="122"/>
    </location>
</feature>
<feature type="active site" evidence="1">
    <location>
        <position position="123"/>
    </location>
</feature>
<feature type="site" description="Role in lipopolysaccharide recognition" evidence="1">
    <location>
        <position position="88"/>
    </location>
</feature>
<feature type="site" description="Role in the phospholipid gating" evidence="1">
    <location>
        <position position="193"/>
    </location>
</feature>
<name>PAGP_PHOAA</name>
<keyword id="KW-0012">Acyltransferase</keyword>
<keyword id="KW-0998">Cell outer membrane</keyword>
<keyword id="KW-0472">Membrane</keyword>
<keyword id="KW-0732">Signal</keyword>
<keyword id="KW-0808">Transferase</keyword>
<organism>
    <name type="scientific">Photorhabdus asymbiotica subsp. asymbiotica (strain ATCC 43949 / 3105-77)</name>
    <name type="common">Xenorhabdus luminescens (strain 2)</name>
    <dbReference type="NCBI Taxonomy" id="553480"/>
    <lineage>
        <taxon>Bacteria</taxon>
        <taxon>Pseudomonadati</taxon>
        <taxon>Pseudomonadota</taxon>
        <taxon>Gammaproteobacteria</taxon>
        <taxon>Enterobacterales</taxon>
        <taxon>Morganellaceae</taxon>
        <taxon>Photorhabdus</taxon>
    </lineage>
</organism>
<accession>C7BTJ1</accession>
<comment type="function">
    <text evidence="1">Transfers a fatty acid residue from the sn-1 position of a phospholipid to the N-linked hydroxyfatty acid chain on the proximal unit of lipid A or its precursors.</text>
</comment>
<comment type="catalytic activity">
    <reaction evidence="1">
        <text>a lipid A + a 1,2-diacyl-sn-glycero-3-phosphocholine = a hepta-acyl lipid A + a 2-acyl-sn-glycero-3-phosphocholine</text>
        <dbReference type="Rhea" id="RHEA:74275"/>
        <dbReference type="ChEBI" id="CHEBI:57643"/>
        <dbReference type="ChEBI" id="CHEBI:57875"/>
        <dbReference type="ChEBI" id="CHEBI:193141"/>
        <dbReference type="ChEBI" id="CHEBI:193142"/>
        <dbReference type="EC" id="2.3.1.251"/>
    </reaction>
</comment>
<comment type="catalytic activity">
    <reaction evidence="1">
        <text>a lipid IVA + a 1,2-diacyl-sn-glycero-3-phosphocholine = a lipid IVB + a 2-acyl-sn-glycero-3-phosphocholine</text>
        <dbReference type="Rhea" id="RHEA:74279"/>
        <dbReference type="ChEBI" id="CHEBI:57643"/>
        <dbReference type="ChEBI" id="CHEBI:57875"/>
        <dbReference type="ChEBI" id="CHEBI:176425"/>
        <dbReference type="ChEBI" id="CHEBI:193143"/>
        <dbReference type="EC" id="2.3.1.251"/>
    </reaction>
</comment>
<comment type="catalytic activity">
    <reaction evidence="1">
        <text>a lipid IIA + a 1,2-diacyl-sn-glycero-3-phosphocholine = a lipid IIB + a 2-acyl-sn-glycero-3-phosphocholine</text>
        <dbReference type="Rhea" id="RHEA:74283"/>
        <dbReference type="ChEBI" id="CHEBI:57643"/>
        <dbReference type="ChEBI" id="CHEBI:57875"/>
        <dbReference type="ChEBI" id="CHEBI:193144"/>
        <dbReference type="ChEBI" id="CHEBI:193145"/>
        <dbReference type="EC" id="2.3.1.251"/>
    </reaction>
</comment>
<comment type="subunit">
    <text evidence="1">Homodimer.</text>
</comment>
<comment type="subcellular location">
    <subcellularLocation>
        <location evidence="1">Cell outer membrane</location>
    </subcellularLocation>
</comment>
<comment type="similarity">
    <text evidence="1">Belongs to the lipid A palmitoyltransferase family.</text>
</comment>
<dbReference type="EC" id="2.3.1.251" evidence="1"/>
<dbReference type="EMBL" id="FM162591">
    <property type="protein sequence ID" value="CAQ83846.1"/>
    <property type="molecule type" value="Genomic_DNA"/>
</dbReference>
<dbReference type="SMR" id="C7BTJ1"/>
<dbReference type="STRING" id="291112.PAU_01754"/>
<dbReference type="KEGG" id="pay:PAU_01754"/>
<dbReference type="eggNOG" id="ENOG502Z7SY">
    <property type="taxonomic scope" value="Bacteria"/>
</dbReference>
<dbReference type="Proteomes" id="UP000002747">
    <property type="component" value="Chromosome"/>
</dbReference>
<dbReference type="GO" id="GO:0009279">
    <property type="term" value="C:cell outer membrane"/>
    <property type="evidence" value="ECO:0007669"/>
    <property type="project" value="UniProtKB-SubCell"/>
</dbReference>
<dbReference type="GO" id="GO:0016746">
    <property type="term" value="F:acyltransferase activity"/>
    <property type="evidence" value="ECO:0007669"/>
    <property type="project" value="UniProtKB-UniRule"/>
</dbReference>
<dbReference type="GO" id="GO:0009245">
    <property type="term" value="P:lipid A biosynthetic process"/>
    <property type="evidence" value="ECO:0007669"/>
    <property type="project" value="UniProtKB-UniRule"/>
</dbReference>
<dbReference type="FunFam" id="2.40.160.20:FF:000002">
    <property type="entry name" value="Lipid A palmitoyltransferase PagP"/>
    <property type="match status" value="1"/>
</dbReference>
<dbReference type="Gene3D" id="2.40.160.20">
    <property type="match status" value="1"/>
</dbReference>
<dbReference type="HAMAP" id="MF_00837">
    <property type="entry name" value="PagP_transferase"/>
    <property type="match status" value="1"/>
</dbReference>
<dbReference type="InterPro" id="IPR009746">
    <property type="entry name" value="LipidA_acyl_PagP"/>
</dbReference>
<dbReference type="InterPro" id="IPR011250">
    <property type="entry name" value="OMP/PagP_b-brl"/>
</dbReference>
<dbReference type="NCBIfam" id="NF008271">
    <property type="entry name" value="PRK11045.1"/>
    <property type="match status" value="1"/>
</dbReference>
<dbReference type="Pfam" id="PF07017">
    <property type="entry name" value="PagP"/>
    <property type="match status" value="1"/>
</dbReference>
<dbReference type="SUPFAM" id="SSF56925">
    <property type="entry name" value="OMPA-like"/>
    <property type="match status" value="1"/>
</dbReference>
<protein>
    <recommendedName>
        <fullName evidence="1">Lipid A acyltransferase PagP</fullName>
        <ecNumber evidence="1">2.3.1.251</ecNumber>
    </recommendedName>
    <alternativeName>
        <fullName evidence="1">Lipid A acylation protein</fullName>
    </alternativeName>
</protein>
<sequence>MKFDLTTAYTLSIPLLASSGTVLATTADTSSKSSTMTAIHTSTGYNNHSDSLWATFNNNVALTWDAPNNEFYLPVITWHNRYTYDKEKTDKYNERPWGFGYGKYRYDKDNDWHSLYAMAFMDSHNRLEPIIGYGFQKMWIPGDLDGFRLGVGFTLSVTARHDYYYVPIPLPLPLFSVEYDQLSFQGTYIPGTYNNGNVFFAWLRWQW</sequence>
<proteinExistence type="inferred from homology"/>
<reference key="1">
    <citation type="journal article" date="2009" name="BMC Genomics">
        <title>Comparative genomics of the emerging human pathogen Photorhabdus asymbiotica with the insect pathogen Photorhabdus luminescens.</title>
        <authorList>
            <person name="Wilkinson P."/>
            <person name="Waterfield N.R."/>
            <person name="Crossman L."/>
            <person name="Corton C."/>
            <person name="Sanchez-Contreras M."/>
            <person name="Vlisidou I."/>
            <person name="Barron A."/>
            <person name="Bignell A."/>
            <person name="Clark L."/>
            <person name="Ormond D."/>
            <person name="Mayho M."/>
            <person name="Bason N."/>
            <person name="Smith F."/>
            <person name="Simmonds M."/>
            <person name="Churcher C."/>
            <person name="Harris D."/>
            <person name="Thompson N.R."/>
            <person name="Quail M."/>
            <person name="Parkhill J."/>
            <person name="ffrench-Constant R.H."/>
        </authorList>
    </citation>
    <scope>NUCLEOTIDE SEQUENCE [LARGE SCALE GENOMIC DNA]</scope>
    <source>
        <strain>ATCC 43949 / 3105-77</strain>
    </source>
</reference>